<evidence type="ECO:0000255" key="1"/>
<evidence type="ECO:0000305" key="2"/>
<protein>
    <recommendedName>
        <fullName>Uncharacterized protein YebO</fullName>
    </recommendedName>
</protein>
<accession>P64499</accession>
<accession>P76266</accession>
<accession>Q2MB18</accession>
<reference key="1">
    <citation type="journal article" date="1997" name="Science">
        <title>The complete genome sequence of Escherichia coli K-12.</title>
        <authorList>
            <person name="Blattner F.R."/>
            <person name="Plunkett G. III"/>
            <person name="Bloch C.A."/>
            <person name="Perna N.T."/>
            <person name="Burland V."/>
            <person name="Riley M."/>
            <person name="Collado-Vides J."/>
            <person name="Glasner J.D."/>
            <person name="Rode C.K."/>
            <person name="Mayhew G.F."/>
            <person name="Gregor J."/>
            <person name="Davis N.W."/>
            <person name="Kirkpatrick H.A."/>
            <person name="Goeden M.A."/>
            <person name="Rose D.J."/>
            <person name="Mau B."/>
            <person name="Shao Y."/>
        </authorList>
    </citation>
    <scope>NUCLEOTIDE SEQUENCE [LARGE SCALE GENOMIC DNA]</scope>
    <source>
        <strain>K12 / MG1655 / ATCC 47076</strain>
    </source>
</reference>
<reference key="2">
    <citation type="journal article" date="2006" name="Mol. Syst. Biol.">
        <title>Highly accurate genome sequences of Escherichia coli K-12 strains MG1655 and W3110.</title>
        <authorList>
            <person name="Hayashi K."/>
            <person name="Morooka N."/>
            <person name="Yamamoto Y."/>
            <person name="Fujita K."/>
            <person name="Isono K."/>
            <person name="Choi S."/>
            <person name="Ohtsubo E."/>
            <person name="Baba T."/>
            <person name="Wanner B.L."/>
            <person name="Mori H."/>
            <person name="Horiuchi T."/>
        </authorList>
    </citation>
    <scope>NUCLEOTIDE SEQUENCE [LARGE SCALE GENOMIC DNA]</scope>
    <source>
        <strain>K12 / W3110 / ATCC 27325 / DSM 5911</strain>
    </source>
</reference>
<proteinExistence type="predicted"/>
<dbReference type="EMBL" id="U00096">
    <property type="protein sequence ID" value="AAC74895.1"/>
    <property type="molecule type" value="Genomic_DNA"/>
</dbReference>
<dbReference type="EMBL" id="AP009048">
    <property type="protein sequence ID" value="BAE76538.1"/>
    <property type="molecule type" value="Genomic_DNA"/>
</dbReference>
<dbReference type="PIR" id="A64944">
    <property type="entry name" value="A64944"/>
</dbReference>
<dbReference type="RefSeq" id="NP_416339.1">
    <property type="nucleotide sequence ID" value="NC_000913.3"/>
</dbReference>
<dbReference type="RefSeq" id="WP_001006866.1">
    <property type="nucleotide sequence ID" value="NZ_STEB01000009.1"/>
</dbReference>
<dbReference type="SMR" id="P64499"/>
<dbReference type="BioGRID" id="4259148">
    <property type="interactions" value="14"/>
</dbReference>
<dbReference type="DIP" id="DIP-48171N"/>
<dbReference type="FunCoup" id="P64499">
    <property type="interactions" value="69"/>
</dbReference>
<dbReference type="STRING" id="511145.b1825"/>
<dbReference type="PaxDb" id="511145-b1825"/>
<dbReference type="EnsemblBacteria" id="AAC74895">
    <property type="protein sequence ID" value="AAC74895"/>
    <property type="gene ID" value="b1825"/>
</dbReference>
<dbReference type="GeneID" id="946350"/>
<dbReference type="KEGG" id="ecj:JW1814"/>
<dbReference type="KEGG" id="eco:b1825"/>
<dbReference type="KEGG" id="ecoc:C3026_10400"/>
<dbReference type="PATRIC" id="fig|1411691.4.peg.426"/>
<dbReference type="EchoBASE" id="EB3770"/>
<dbReference type="eggNOG" id="ENOG5032S3N">
    <property type="taxonomic scope" value="Bacteria"/>
</dbReference>
<dbReference type="HOGENOM" id="CLU_165389_1_0_6"/>
<dbReference type="InParanoid" id="P64499"/>
<dbReference type="OMA" id="VLWFFVN"/>
<dbReference type="OrthoDB" id="6485757at2"/>
<dbReference type="PhylomeDB" id="P64499"/>
<dbReference type="BioCyc" id="EcoCyc:G7001-MONOMER"/>
<dbReference type="PRO" id="PR:P64499"/>
<dbReference type="Proteomes" id="UP000000625">
    <property type="component" value="Chromosome"/>
</dbReference>
<dbReference type="GO" id="GO:0005886">
    <property type="term" value="C:plasma membrane"/>
    <property type="evidence" value="ECO:0007669"/>
    <property type="project" value="UniProtKB-SubCell"/>
</dbReference>
<dbReference type="InterPro" id="IPR025594">
    <property type="entry name" value="YebO"/>
</dbReference>
<dbReference type="Pfam" id="PF13974">
    <property type="entry name" value="YebO"/>
    <property type="match status" value="1"/>
</dbReference>
<feature type="chain" id="PRO_0000169046" description="Uncharacterized protein YebO">
    <location>
        <begin position="1"/>
        <end position="95"/>
    </location>
</feature>
<feature type="transmembrane region" description="Helical" evidence="1">
    <location>
        <begin position="12"/>
        <end position="32"/>
    </location>
</feature>
<keyword id="KW-1003">Cell membrane</keyword>
<keyword id="KW-0472">Membrane</keyword>
<keyword id="KW-1185">Reference proteome</keyword>
<keyword id="KW-0812">Transmembrane</keyword>
<keyword id="KW-1133">Transmembrane helix</keyword>
<organism>
    <name type="scientific">Escherichia coli (strain K12)</name>
    <dbReference type="NCBI Taxonomy" id="83333"/>
    <lineage>
        <taxon>Bacteria</taxon>
        <taxon>Pseudomonadati</taxon>
        <taxon>Pseudomonadota</taxon>
        <taxon>Gammaproteobacteria</taxon>
        <taxon>Enterobacterales</taxon>
        <taxon>Enterobacteriaceae</taxon>
        <taxon>Escherichia</taxon>
    </lineage>
</organism>
<gene>
    <name type="primary">yebO</name>
    <name type="ordered locus">b1825</name>
    <name type="ordered locus">JW1814</name>
</gene>
<sequence>MNEVVNSGVMNIASLVVSVVVLLIGLILWFFINRASSRTNEQIELLEALLDQQKRQNALLRRLCEANEPEKADKKTVESQKSVEDEDIIRLVAER</sequence>
<comment type="subcellular location">
    <subcellularLocation>
        <location evidence="2">Cell membrane</location>
        <topology evidence="2">Single-pass membrane protein</topology>
    </subcellularLocation>
</comment>
<name>YEBO_ECOLI</name>